<gene>
    <name evidence="1" type="primary">pdxJ</name>
    <name type="ordered locus">AZOSEA31560</name>
    <name type="ORF">ebA5544</name>
</gene>
<keyword id="KW-0963">Cytoplasm</keyword>
<keyword id="KW-0664">Pyridoxine biosynthesis</keyword>
<keyword id="KW-1185">Reference proteome</keyword>
<keyword id="KW-0808">Transferase</keyword>
<organism>
    <name type="scientific">Aromatoleum aromaticum (strain DSM 19018 / LMG 30748 / EbN1)</name>
    <name type="common">Azoarcus sp. (strain EbN1)</name>
    <dbReference type="NCBI Taxonomy" id="76114"/>
    <lineage>
        <taxon>Bacteria</taxon>
        <taxon>Pseudomonadati</taxon>
        <taxon>Pseudomonadota</taxon>
        <taxon>Betaproteobacteria</taxon>
        <taxon>Rhodocyclales</taxon>
        <taxon>Rhodocyclaceae</taxon>
        <taxon>Aromatoleum</taxon>
    </lineage>
</organism>
<proteinExistence type="inferred from homology"/>
<evidence type="ECO:0000255" key="1">
    <source>
        <dbReference type="HAMAP-Rule" id="MF_00279"/>
    </source>
</evidence>
<name>PDXJ_AROAE</name>
<dbReference type="EC" id="2.6.99.2" evidence="1"/>
<dbReference type="EMBL" id="CR555306">
    <property type="protein sequence ID" value="CAI09281.1"/>
    <property type="molecule type" value="Genomic_DNA"/>
</dbReference>
<dbReference type="RefSeq" id="WP_011238951.1">
    <property type="nucleotide sequence ID" value="NC_006513.1"/>
</dbReference>
<dbReference type="SMR" id="Q5P083"/>
<dbReference type="STRING" id="76114.ebA5544"/>
<dbReference type="KEGG" id="eba:ebA5544"/>
<dbReference type="eggNOG" id="COG0854">
    <property type="taxonomic scope" value="Bacteria"/>
</dbReference>
<dbReference type="HOGENOM" id="CLU_074563_0_0_4"/>
<dbReference type="OrthoDB" id="9806590at2"/>
<dbReference type="UniPathway" id="UPA00244">
    <property type="reaction ID" value="UER00313"/>
</dbReference>
<dbReference type="Proteomes" id="UP000006552">
    <property type="component" value="Chromosome"/>
</dbReference>
<dbReference type="GO" id="GO:0005829">
    <property type="term" value="C:cytosol"/>
    <property type="evidence" value="ECO:0007669"/>
    <property type="project" value="TreeGrafter"/>
</dbReference>
<dbReference type="GO" id="GO:0033856">
    <property type="term" value="F:pyridoxine 5'-phosphate synthase activity"/>
    <property type="evidence" value="ECO:0007669"/>
    <property type="project" value="UniProtKB-EC"/>
</dbReference>
<dbReference type="GO" id="GO:0008615">
    <property type="term" value="P:pyridoxine biosynthetic process"/>
    <property type="evidence" value="ECO:0007669"/>
    <property type="project" value="UniProtKB-UniRule"/>
</dbReference>
<dbReference type="CDD" id="cd00003">
    <property type="entry name" value="PNPsynthase"/>
    <property type="match status" value="1"/>
</dbReference>
<dbReference type="Gene3D" id="3.20.20.70">
    <property type="entry name" value="Aldolase class I"/>
    <property type="match status" value="1"/>
</dbReference>
<dbReference type="HAMAP" id="MF_00279">
    <property type="entry name" value="PdxJ"/>
    <property type="match status" value="1"/>
</dbReference>
<dbReference type="InterPro" id="IPR013785">
    <property type="entry name" value="Aldolase_TIM"/>
</dbReference>
<dbReference type="InterPro" id="IPR004569">
    <property type="entry name" value="PyrdxlP_synth_PdxJ"/>
</dbReference>
<dbReference type="InterPro" id="IPR036130">
    <property type="entry name" value="Pyridoxine-5'_phos_synth"/>
</dbReference>
<dbReference type="NCBIfam" id="TIGR00559">
    <property type="entry name" value="pdxJ"/>
    <property type="match status" value="1"/>
</dbReference>
<dbReference type="NCBIfam" id="NF003625">
    <property type="entry name" value="PRK05265.1-3"/>
    <property type="match status" value="1"/>
</dbReference>
<dbReference type="NCBIfam" id="NF003627">
    <property type="entry name" value="PRK05265.1-5"/>
    <property type="match status" value="1"/>
</dbReference>
<dbReference type="PANTHER" id="PTHR30456">
    <property type="entry name" value="PYRIDOXINE 5'-PHOSPHATE SYNTHASE"/>
    <property type="match status" value="1"/>
</dbReference>
<dbReference type="PANTHER" id="PTHR30456:SF0">
    <property type="entry name" value="PYRIDOXINE 5'-PHOSPHATE SYNTHASE"/>
    <property type="match status" value="1"/>
</dbReference>
<dbReference type="Pfam" id="PF03740">
    <property type="entry name" value="PdxJ"/>
    <property type="match status" value="1"/>
</dbReference>
<dbReference type="SUPFAM" id="SSF63892">
    <property type="entry name" value="Pyridoxine 5'-phosphate synthase"/>
    <property type="match status" value="1"/>
</dbReference>
<feature type="chain" id="PRO_0000231780" description="Pyridoxine 5'-phosphate synthase">
    <location>
        <begin position="1"/>
        <end position="251"/>
    </location>
</feature>
<feature type="active site" description="Proton acceptor" evidence="1">
    <location>
        <position position="43"/>
    </location>
</feature>
<feature type="active site" description="Proton acceptor" evidence="1">
    <location>
        <position position="70"/>
    </location>
</feature>
<feature type="active site" description="Proton donor" evidence="1">
    <location>
        <position position="198"/>
    </location>
</feature>
<feature type="binding site" evidence="1">
    <location>
        <position position="7"/>
    </location>
    <ligand>
        <name>3-amino-2-oxopropyl phosphate</name>
        <dbReference type="ChEBI" id="CHEBI:57279"/>
    </ligand>
</feature>
<feature type="binding site" evidence="1">
    <location>
        <begin position="9"/>
        <end position="10"/>
    </location>
    <ligand>
        <name>1-deoxy-D-xylulose 5-phosphate</name>
        <dbReference type="ChEBI" id="CHEBI:57792"/>
    </ligand>
</feature>
<feature type="binding site" evidence="1">
    <location>
        <position position="18"/>
    </location>
    <ligand>
        <name>3-amino-2-oxopropyl phosphate</name>
        <dbReference type="ChEBI" id="CHEBI:57279"/>
    </ligand>
</feature>
<feature type="binding site" evidence="1">
    <location>
        <position position="45"/>
    </location>
    <ligand>
        <name>1-deoxy-D-xylulose 5-phosphate</name>
        <dbReference type="ChEBI" id="CHEBI:57792"/>
    </ligand>
</feature>
<feature type="binding site" evidence="1">
    <location>
        <position position="50"/>
    </location>
    <ligand>
        <name>1-deoxy-D-xylulose 5-phosphate</name>
        <dbReference type="ChEBI" id="CHEBI:57792"/>
    </ligand>
</feature>
<feature type="binding site" evidence="1">
    <location>
        <position position="100"/>
    </location>
    <ligand>
        <name>1-deoxy-D-xylulose 5-phosphate</name>
        <dbReference type="ChEBI" id="CHEBI:57792"/>
    </ligand>
</feature>
<feature type="binding site" evidence="1">
    <location>
        <position position="199"/>
    </location>
    <ligand>
        <name>3-amino-2-oxopropyl phosphate</name>
        <dbReference type="ChEBI" id="CHEBI:57279"/>
    </ligand>
</feature>
<feature type="binding site" evidence="1">
    <location>
        <begin position="220"/>
        <end position="221"/>
    </location>
    <ligand>
        <name>3-amino-2-oxopropyl phosphate</name>
        <dbReference type="ChEBI" id="CHEBI:57279"/>
    </ligand>
</feature>
<feature type="site" description="Transition state stabilizer" evidence="1">
    <location>
        <position position="151"/>
    </location>
</feature>
<accession>Q5P083</accession>
<sequence>MIELGVNIDHVATLRQARRTWEPDPAWAAMEAHLGGADGITVHLREDRRHIQDEDVRRLRELTQVKLNLEMAATDEMVGIACALRPEMAMLVPEGRHEVTTEGGLDVLAQEGRLKDVVARLADAGIVTSVFIDAELGQVEAAARIGARVCEIHTGPYAHAFHAAGRDPQSAAVVDEIDKVRRAGEAIRALGMRFNAGHALNYYNVQPIARLPEVRELHIGHAIVSRSVFTGLRDAVREMKRLMREAAGVGR</sequence>
<comment type="function">
    <text evidence="1">Catalyzes the complicated ring closure reaction between the two acyclic compounds 1-deoxy-D-xylulose-5-phosphate (DXP) and 3-amino-2-oxopropyl phosphate (1-amino-acetone-3-phosphate or AAP) to form pyridoxine 5'-phosphate (PNP) and inorganic phosphate.</text>
</comment>
<comment type="catalytic activity">
    <reaction evidence="1">
        <text>3-amino-2-oxopropyl phosphate + 1-deoxy-D-xylulose 5-phosphate = pyridoxine 5'-phosphate + phosphate + 2 H2O + H(+)</text>
        <dbReference type="Rhea" id="RHEA:15265"/>
        <dbReference type="ChEBI" id="CHEBI:15377"/>
        <dbReference type="ChEBI" id="CHEBI:15378"/>
        <dbReference type="ChEBI" id="CHEBI:43474"/>
        <dbReference type="ChEBI" id="CHEBI:57279"/>
        <dbReference type="ChEBI" id="CHEBI:57792"/>
        <dbReference type="ChEBI" id="CHEBI:58589"/>
        <dbReference type="EC" id="2.6.99.2"/>
    </reaction>
</comment>
<comment type="pathway">
    <text evidence="1">Cofactor biosynthesis; pyridoxine 5'-phosphate biosynthesis; pyridoxine 5'-phosphate from D-erythrose 4-phosphate: step 5/5.</text>
</comment>
<comment type="subunit">
    <text evidence="1">Homooctamer; tetramer of dimers.</text>
</comment>
<comment type="subcellular location">
    <subcellularLocation>
        <location evidence="1">Cytoplasm</location>
    </subcellularLocation>
</comment>
<comment type="similarity">
    <text evidence="1">Belongs to the PNP synthase family.</text>
</comment>
<reference key="1">
    <citation type="journal article" date="2005" name="Arch. Microbiol.">
        <title>The genome sequence of an anaerobic aromatic-degrading denitrifying bacterium, strain EbN1.</title>
        <authorList>
            <person name="Rabus R."/>
            <person name="Kube M."/>
            <person name="Heider J."/>
            <person name="Beck A."/>
            <person name="Heitmann K."/>
            <person name="Widdel F."/>
            <person name="Reinhardt R."/>
        </authorList>
    </citation>
    <scope>NUCLEOTIDE SEQUENCE [LARGE SCALE GENOMIC DNA]</scope>
    <source>
        <strain>DSM 19018 / LMG 30748 / EbN1</strain>
    </source>
</reference>
<protein>
    <recommendedName>
        <fullName evidence="1">Pyridoxine 5'-phosphate synthase</fullName>
        <shortName evidence="1">PNP synthase</shortName>
        <ecNumber evidence="1">2.6.99.2</ecNumber>
    </recommendedName>
</protein>